<evidence type="ECO:0000255" key="1">
    <source>
        <dbReference type="HAMAP-Rule" id="MF_00105"/>
    </source>
</evidence>
<organism>
    <name type="scientific">Nitrosococcus oceani (strain ATCC 19707 / BCRC 17464 / JCM 30415 / NCIMB 11848 / C-107)</name>
    <dbReference type="NCBI Taxonomy" id="323261"/>
    <lineage>
        <taxon>Bacteria</taxon>
        <taxon>Pseudomonadati</taxon>
        <taxon>Pseudomonadota</taxon>
        <taxon>Gammaproteobacteria</taxon>
        <taxon>Chromatiales</taxon>
        <taxon>Chromatiaceae</taxon>
        <taxon>Nitrosococcus</taxon>
    </lineage>
</organism>
<feature type="chain" id="PRO_1000034285" description="Transcription elongation factor GreA">
    <location>
        <begin position="1"/>
        <end position="158"/>
    </location>
</feature>
<feature type="coiled-coil region" evidence="1">
    <location>
        <begin position="1"/>
        <end position="26"/>
    </location>
</feature>
<dbReference type="EMBL" id="CP000127">
    <property type="protein sequence ID" value="ABA59024.1"/>
    <property type="molecule type" value="Genomic_DNA"/>
</dbReference>
<dbReference type="RefSeq" id="WP_004269155.1">
    <property type="nucleotide sequence ID" value="NC_007484.1"/>
</dbReference>
<dbReference type="SMR" id="Q3J822"/>
<dbReference type="FunCoup" id="Q3J822">
    <property type="interactions" value="479"/>
</dbReference>
<dbReference type="STRING" id="323261.Noc_2571"/>
<dbReference type="KEGG" id="noc:Noc_2571"/>
<dbReference type="eggNOG" id="COG0782">
    <property type="taxonomic scope" value="Bacteria"/>
</dbReference>
<dbReference type="HOGENOM" id="CLU_101379_2_0_6"/>
<dbReference type="InParanoid" id="Q3J822"/>
<dbReference type="Proteomes" id="UP000006838">
    <property type="component" value="Chromosome"/>
</dbReference>
<dbReference type="GO" id="GO:0003677">
    <property type="term" value="F:DNA binding"/>
    <property type="evidence" value="ECO:0007669"/>
    <property type="project" value="UniProtKB-UniRule"/>
</dbReference>
<dbReference type="GO" id="GO:0070063">
    <property type="term" value="F:RNA polymerase binding"/>
    <property type="evidence" value="ECO:0007669"/>
    <property type="project" value="InterPro"/>
</dbReference>
<dbReference type="GO" id="GO:0006354">
    <property type="term" value="P:DNA-templated transcription elongation"/>
    <property type="evidence" value="ECO:0007669"/>
    <property type="project" value="TreeGrafter"/>
</dbReference>
<dbReference type="GO" id="GO:0032784">
    <property type="term" value="P:regulation of DNA-templated transcription elongation"/>
    <property type="evidence" value="ECO:0007669"/>
    <property type="project" value="UniProtKB-UniRule"/>
</dbReference>
<dbReference type="FunFam" id="1.10.287.180:FF:000001">
    <property type="entry name" value="Transcription elongation factor GreA"/>
    <property type="match status" value="1"/>
</dbReference>
<dbReference type="FunFam" id="3.10.50.30:FF:000001">
    <property type="entry name" value="Transcription elongation factor GreA"/>
    <property type="match status" value="1"/>
</dbReference>
<dbReference type="Gene3D" id="3.10.50.30">
    <property type="entry name" value="Transcription elongation factor, GreA/GreB, C-terminal domain"/>
    <property type="match status" value="1"/>
</dbReference>
<dbReference type="Gene3D" id="1.10.287.180">
    <property type="entry name" value="Transcription elongation factor, GreA/GreB, N-terminal domain"/>
    <property type="match status" value="1"/>
</dbReference>
<dbReference type="HAMAP" id="MF_00105">
    <property type="entry name" value="GreA_GreB"/>
    <property type="match status" value="1"/>
</dbReference>
<dbReference type="InterPro" id="IPR036953">
    <property type="entry name" value="GreA/GreB_C_sf"/>
</dbReference>
<dbReference type="InterPro" id="IPR018151">
    <property type="entry name" value="TF_GreA/GreB_CS"/>
</dbReference>
<dbReference type="InterPro" id="IPR006359">
    <property type="entry name" value="Tscrpt_elong_fac_GreA"/>
</dbReference>
<dbReference type="InterPro" id="IPR028624">
    <property type="entry name" value="Tscrpt_elong_fac_GreA/B"/>
</dbReference>
<dbReference type="InterPro" id="IPR001437">
    <property type="entry name" value="Tscrpt_elong_fac_GreA/B_C"/>
</dbReference>
<dbReference type="InterPro" id="IPR023459">
    <property type="entry name" value="Tscrpt_elong_fac_GreA/B_fam"/>
</dbReference>
<dbReference type="InterPro" id="IPR022691">
    <property type="entry name" value="Tscrpt_elong_fac_GreA/B_N"/>
</dbReference>
<dbReference type="InterPro" id="IPR036805">
    <property type="entry name" value="Tscrpt_elong_fac_GreA/B_N_sf"/>
</dbReference>
<dbReference type="NCBIfam" id="TIGR01462">
    <property type="entry name" value="greA"/>
    <property type="match status" value="1"/>
</dbReference>
<dbReference type="NCBIfam" id="NF001261">
    <property type="entry name" value="PRK00226.1-2"/>
    <property type="match status" value="1"/>
</dbReference>
<dbReference type="NCBIfam" id="NF001263">
    <property type="entry name" value="PRK00226.1-4"/>
    <property type="match status" value="1"/>
</dbReference>
<dbReference type="NCBIfam" id="NF001264">
    <property type="entry name" value="PRK00226.1-5"/>
    <property type="match status" value="1"/>
</dbReference>
<dbReference type="PANTHER" id="PTHR30437">
    <property type="entry name" value="TRANSCRIPTION ELONGATION FACTOR GREA"/>
    <property type="match status" value="1"/>
</dbReference>
<dbReference type="PANTHER" id="PTHR30437:SF4">
    <property type="entry name" value="TRANSCRIPTION ELONGATION FACTOR GREA"/>
    <property type="match status" value="1"/>
</dbReference>
<dbReference type="Pfam" id="PF01272">
    <property type="entry name" value="GreA_GreB"/>
    <property type="match status" value="1"/>
</dbReference>
<dbReference type="Pfam" id="PF03449">
    <property type="entry name" value="GreA_GreB_N"/>
    <property type="match status" value="1"/>
</dbReference>
<dbReference type="PIRSF" id="PIRSF006092">
    <property type="entry name" value="GreA_GreB"/>
    <property type="match status" value="1"/>
</dbReference>
<dbReference type="SUPFAM" id="SSF54534">
    <property type="entry name" value="FKBP-like"/>
    <property type="match status" value="1"/>
</dbReference>
<dbReference type="SUPFAM" id="SSF46557">
    <property type="entry name" value="GreA transcript cleavage protein, N-terminal domain"/>
    <property type="match status" value="1"/>
</dbReference>
<dbReference type="PROSITE" id="PS00829">
    <property type="entry name" value="GREAB_1"/>
    <property type="match status" value="1"/>
</dbReference>
<dbReference type="PROSITE" id="PS00830">
    <property type="entry name" value="GREAB_2"/>
    <property type="match status" value="1"/>
</dbReference>
<name>GREA_NITOC</name>
<protein>
    <recommendedName>
        <fullName evidence="1">Transcription elongation factor GreA</fullName>
    </recommendedName>
    <alternativeName>
        <fullName evidence="1">Transcript cleavage factor GreA</fullName>
    </alternativeName>
</protein>
<accession>Q3J822</accession>
<sequence length="158" mass="17522">MNKVPLTEKGAQQLREELQELKTVVRPKVVTAIAEARAHGDLKENAEYHAAREEQGFVEGRIRDLEHQLAHAQIIDVSKLQKDGRVVFGVTVDLVNIETDEEASYQIVGDLEANIKENKISINSPIARALIGKREGDEIQVQAPSGIILYEIAAIGYQ</sequence>
<reference key="1">
    <citation type="journal article" date="2006" name="Appl. Environ. Microbiol.">
        <title>Complete genome sequence of the marine, chemolithoautotrophic, ammonia-oxidizing bacterium Nitrosococcus oceani ATCC 19707.</title>
        <authorList>
            <person name="Klotz M.G."/>
            <person name="Arp D.J."/>
            <person name="Chain P.S.G."/>
            <person name="El-Sheikh A.F."/>
            <person name="Hauser L.J."/>
            <person name="Hommes N.G."/>
            <person name="Larimer F.W."/>
            <person name="Malfatti S.A."/>
            <person name="Norton J.M."/>
            <person name="Poret-Peterson A.T."/>
            <person name="Vergez L.M."/>
            <person name="Ward B.B."/>
        </authorList>
    </citation>
    <scope>NUCLEOTIDE SEQUENCE [LARGE SCALE GENOMIC DNA]</scope>
    <source>
        <strain>ATCC 19707 / BCRC 17464 / JCM 30415 / NCIMB 11848 / C-107</strain>
    </source>
</reference>
<comment type="function">
    <text evidence="1">Necessary for efficient RNA polymerase transcription elongation past template-encoded arresting sites. The arresting sites in DNA have the property of trapping a certain fraction of elongating RNA polymerases that pass through, resulting in locked ternary complexes. Cleavage of the nascent transcript by cleavage factors such as GreA or GreB allows the resumption of elongation from the new 3'terminus. GreA releases sequences of 2 to 3 nucleotides.</text>
</comment>
<comment type="similarity">
    <text evidence="1">Belongs to the GreA/GreB family.</text>
</comment>
<gene>
    <name evidence="1" type="primary">greA</name>
    <name type="ordered locus">Noc_2571</name>
</gene>
<keyword id="KW-0175">Coiled coil</keyword>
<keyword id="KW-0238">DNA-binding</keyword>
<keyword id="KW-1185">Reference proteome</keyword>
<keyword id="KW-0804">Transcription</keyword>
<keyword id="KW-0805">Transcription regulation</keyword>
<proteinExistence type="inferred from homology"/>